<keyword id="KW-0496">Mitochondrion</keyword>
<comment type="subcellular location">
    <subcellularLocation>
        <location evidence="1">Mitochondrion</location>
    </subcellularLocation>
</comment>
<feature type="chain" id="PRO_0000196894" description="Uncharacterized 3.5 kDa protein in COX1 5'region">
    <location>
        <begin position="1"/>
        <end position="27"/>
    </location>
</feature>
<name>YMCD_EMEND</name>
<organism>
    <name type="scientific">Emericella nidulans</name>
    <name type="common">Aspergillus nidulans</name>
    <dbReference type="NCBI Taxonomy" id="162425"/>
    <lineage>
        <taxon>Eukaryota</taxon>
        <taxon>Fungi</taxon>
        <taxon>Dikarya</taxon>
        <taxon>Ascomycota</taxon>
        <taxon>Pezizomycotina</taxon>
        <taxon>Eurotiomycetes</taxon>
        <taxon>Eurotiomycetidae</taxon>
        <taxon>Eurotiales</taxon>
        <taxon>Aspergillaceae</taxon>
        <taxon>Aspergillus</taxon>
        <taxon>Aspergillus subgen. Nidulantes</taxon>
    </lineage>
</organism>
<dbReference type="EMBL" id="J01390">
    <property type="protein sequence ID" value="AAA99209.1"/>
    <property type="molecule type" value="Genomic_DNA"/>
</dbReference>
<dbReference type="EMBL" id="X07795">
    <property type="protein sequence ID" value="CAA30640.1"/>
    <property type="molecule type" value="Genomic_DNA"/>
</dbReference>
<dbReference type="PIR" id="F93436">
    <property type="entry name" value="QXASD"/>
</dbReference>
<dbReference type="GO" id="GO:0005739">
    <property type="term" value="C:mitochondrion"/>
    <property type="evidence" value="ECO:0007669"/>
    <property type="project" value="UniProtKB-SubCell"/>
</dbReference>
<geneLocation type="mitochondrion"/>
<proteinExistence type="predicted"/>
<protein>
    <recommendedName>
        <fullName>Uncharacterized 3.5 kDa protein in COX1 5'region</fullName>
    </recommendedName>
    <alternativeName>
        <fullName>URF-D</fullName>
    </alternativeName>
</protein>
<accession>P03884</accession>
<evidence type="ECO:0000305" key="1"/>
<sequence length="27" mass="3514">MYSYIYKALLYHGYEKFDLDIWEYFNK</sequence>
<reference key="1">
    <citation type="journal article" date="1981" name="Cell">
        <title>Mitochondrial tRNA gene clusters in Aspergillus nidulans: organization and nucleotide sequence.</title>
        <authorList>
            <person name="Koechel H.G."/>
            <person name="Lazarus C.M."/>
            <person name="Basak N."/>
            <person name="Kuentzel H."/>
        </authorList>
    </citation>
    <scope>NUCLEOTIDE SEQUENCE [GENOMIC DNA]</scope>
    <source>
        <strain>pabaA1 biA1</strain>
    </source>
</reference>
<reference key="2">
    <citation type="journal article" date="1982" name="Nucleic Acids Res.">
        <title>Nucleotide sequence of Aspergillus nidulans mitochondrial genes coding for ATPase subunit 6, cytochrome oxidase subunit 3, seven unidentified proteins, four tRNAs and L-rRNA.</title>
        <authorList>
            <person name="Netzker R."/>
            <person name="Koechel H.G."/>
            <person name="Basak N."/>
            <person name="Kuentzel H."/>
        </authorList>
    </citation>
    <scope>NUCLEOTIDE SEQUENCE [GENOMIC DNA]</scope>
    <source>
        <strain>pabaA1 biA1</strain>
    </source>
</reference>